<evidence type="ECO:0000255" key="1">
    <source>
        <dbReference type="HAMAP-Rule" id="MF_01905"/>
    </source>
</evidence>
<evidence type="ECO:0000256" key="2">
    <source>
        <dbReference type="SAM" id="MobiDB-lite"/>
    </source>
</evidence>
<gene>
    <name evidence="1" type="primary">gbpA</name>
    <name type="synonym">chiY</name>
</gene>
<comment type="function">
    <text evidence="1">Probably interacts with GlcNAc residues. May promote attachment to both epithelial cell surfaces and chitin.</text>
</comment>
<comment type="subcellular location">
    <subcellularLocation>
        <location evidence="1">Secreted</location>
    </subcellularLocation>
</comment>
<comment type="similarity">
    <text evidence="1">Belongs to the GbpA family.</text>
</comment>
<dbReference type="EMBL" id="AJ344214">
    <property type="protein sequence ID" value="CAC83040.2"/>
    <property type="molecule type" value="Genomic_DNA"/>
</dbReference>
<dbReference type="RefSeq" id="WP_005173861.1">
    <property type="nucleotide sequence ID" value="NZ_NBTE02000004.1"/>
</dbReference>
<dbReference type="SMR" id="Q8GBD4"/>
<dbReference type="CAZy" id="AA10">
    <property type="family name" value="Auxiliary Activities 10"/>
</dbReference>
<dbReference type="CAZy" id="CBM5">
    <property type="family name" value="Carbohydrate-Binding Module Family 5"/>
</dbReference>
<dbReference type="KEGG" id="yew:CH47_34"/>
<dbReference type="GO" id="GO:0005576">
    <property type="term" value="C:extracellular region"/>
    <property type="evidence" value="ECO:0007669"/>
    <property type="project" value="UniProtKB-SubCell"/>
</dbReference>
<dbReference type="GO" id="GO:0030246">
    <property type="term" value="F:carbohydrate binding"/>
    <property type="evidence" value="ECO:0007669"/>
    <property type="project" value="InterPro"/>
</dbReference>
<dbReference type="GO" id="GO:0008061">
    <property type="term" value="F:chitin binding"/>
    <property type="evidence" value="ECO:0007669"/>
    <property type="project" value="UniProtKB-UniRule"/>
</dbReference>
<dbReference type="GO" id="GO:0004553">
    <property type="term" value="F:hydrolase activity, hydrolyzing O-glycosyl compounds"/>
    <property type="evidence" value="ECO:0007669"/>
    <property type="project" value="InterPro"/>
</dbReference>
<dbReference type="GO" id="GO:0005975">
    <property type="term" value="P:carbohydrate metabolic process"/>
    <property type="evidence" value="ECO:0007669"/>
    <property type="project" value="InterPro"/>
</dbReference>
<dbReference type="CDD" id="cd12215">
    <property type="entry name" value="ChiC_BD"/>
    <property type="match status" value="1"/>
</dbReference>
<dbReference type="CDD" id="cd21177">
    <property type="entry name" value="LPMO_AA10"/>
    <property type="match status" value="1"/>
</dbReference>
<dbReference type="Gene3D" id="2.60.40.2550">
    <property type="match status" value="1"/>
</dbReference>
<dbReference type="Gene3D" id="3.30.70.2150">
    <property type="match status" value="1"/>
</dbReference>
<dbReference type="Gene3D" id="2.10.10.20">
    <property type="entry name" value="Carbohydrate-binding module superfamily 5/12"/>
    <property type="match status" value="1"/>
</dbReference>
<dbReference type="Gene3D" id="2.70.50.50">
    <property type="entry name" value="chitin-binding protein cbp21"/>
    <property type="match status" value="1"/>
</dbReference>
<dbReference type="HAMAP" id="MF_01905">
    <property type="entry name" value="GbpA"/>
    <property type="match status" value="1"/>
</dbReference>
<dbReference type="InterPro" id="IPR036573">
    <property type="entry name" value="CBM_sf_5/12"/>
</dbReference>
<dbReference type="InterPro" id="IPR004302">
    <property type="entry name" value="Cellulose/chitin-bd_N"/>
</dbReference>
<dbReference type="InterPro" id="IPR041029">
    <property type="entry name" value="GbpA_2"/>
</dbReference>
<dbReference type="InterPro" id="IPR054063">
    <property type="entry name" value="GbpA_D3"/>
</dbReference>
<dbReference type="InterPro" id="IPR020879">
    <property type="entry name" value="GlcNAc-bd_A"/>
</dbReference>
<dbReference type="InterPro" id="IPR051024">
    <property type="entry name" value="GlcNAc_Chitin_IntDeg"/>
</dbReference>
<dbReference type="InterPro" id="IPR014756">
    <property type="entry name" value="Ig_E-set"/>
</dbReference>
<dbReference type="NCBIfam" id="NF009690">
    <property type="entry name" value="PRK13211.1"/>
    <property type="match status" value="1"/>
</dbReference>
<dbReference type="PANTHER" id="PTHR34823:SF1">
    <property type="entry name" value="CHITIN-BINDING TYPE-4 DOMAIN-CONTAINING PROTEIN"/>
    <property type="match status" value="1"/>
</dbReference>
<dbReference type="PANTHER" id="PTHR34823">
    <property type="entry name" value="GLCNAC-BINDING PROTEIN A"/>
    <property type="match status" value="1"/>
</dbReference>
<dbReference type="Pfam" id="PF18416">
    <property type="entry name" value="GbpA_2"/>
    <property type="match status" value="1"/>
</dbReference>
<dbReference type="Pfam" id="PF21868">
    <property type="entry name" value="GbpA_D3"/>
    <property type="match status" value="1"/>
</dbReference>
<dbReference type="Pfam" id="PF03067">
    <property type="entry name" value="LPMO_10"/>
    <property type="match status" value="1"/>
</dbReference>
<dbReference type="SUPFAM" id="SSF51055">
    <property type="entry name" value="Carbohydrate binding domain"/>
    <property type="match status" value="1"/>
</dbReference>
<dbReference type="SUPFAM" id="SSF81296">
    <property type="entry name" value="E set domains"/>
    <property type="match status" value="1"/>
</dbReference>
<name>GBPA_YEREN</name>
<organism>
    <name type="scientific">Yersinia enterocolitica</name>
    <dbReference type="NCBI Taxonomy" id="630"/>
    <lineage>
        <taxon>Bacteria</taxon>
        <taxon>Pseudomonadati</taxon>
        <taxon>Pseudomonadota</taxon>
        <taxon>Gammaproteobacteria</taxon>
        <taxon>Enterobacterales</taxon>
        <taxon>Yersiniaceae</taxon>
        <taxon>Yersinia</taxon>
    </lineage>
</organism>
<reference key="1">
    <citation type="journal article" date="2003" name="Infect. Immun.">
        <title>Novel virulence-associated type II secretion system unique to high-pathogenicity Yersinia enterocolitica.</title>
        <authorList>
            <person name="Iwobi A."/>
            <person name="Heesemann J."/>
            <person name="Garcia E."/>
            <person name="Igwe E."/>
            <person name="Noelting C."/>
            <person name="Rakin A."/>
        </authorList>
    </citation>
    <scope>NUCLEOTIDE SEQUENCE [GENOMIC DNA]</scope>
    <source>
        <strain>ATCC 51871 / WA-314 / Serotype O:8</strain>
    </source>
</reference>
<proteinExistence type="inferred from homology"/>
<accession>Q8GBD4</accession>
<sequence length="494" mass="53425">MKLNKIMLAMVVMSISGTAMAHGYIENPPSRNFLCNAQGGSLNKDCGGVQYEPQSSGETADGFPQQGPVDGKLASGDNWVSVNLNQQTAERWTKVKMKAGPQEFKWKFTAAHPIADFKYYMTKQDWNPNQPLTRDSLDLTPFCVIPGGPASTTGSTTHTCNIPERTGYQVIYGAWDVSDTPGTFYNMIDAEFDGATGEVVVSEWTKSIGNIEPHDDLNAGDTVKLRMFDQQGERSDLVVEITIADAKEGKKNNWSHALASKLNNTHQDIRAGKKDSKGTVTATHGANAIFINANSNILRAEVQIEKSPAGEVSATDASFSANGMKKEYQMADGALAIHFDVKTMGSMDLEAKVFAADNSVKGYKDMTLEDASQHVSIAMTGLKAGKHTLVILGTDAQGKTQQQSIDFMVKGETVKPEVKPEVKPEVDGANKQCTAPAWSNKSSYQAKDTVTHNGRIYMSKWWADKASVPGDAAVTDTTGNGSGWGKVWEDKGAC</sequence>
<protein>
    <recommendedName>
        <fullName evidence="1">GlcNAc-binding protein A</fullName>
    </recommendedName>
</protein>
<keyword id="KW-0147">Chitin-binding</keyword>
<keyword id="KW-0964">Secreted</keyword>
<keyword id="KW-0732">Signal</keyword>
<feature type="signal peptide" evidence="1">
    <location>
        <begin position="1"/>
        <end position="21"/>
    </location>
</feature>
<feature type="chain" id="PRO_0000229728" description="GlcNAc-binding protein A">
    <location>
        <begin position="22"/>
        <end position="494"/>
    </location>
</feature>
<feature type="domain" description="Chitin-binding type-4" evidence="1">
    <location>
        <begin position="22"/>
        <end position="192"/>
    </location>
</feature>
<feature type="domain" description="Chitin-binding type-3" evidence="1">
    <location>
        <begin position="435"/>
        <end position="484"/>
    </location>
</feature>
<feature type="region of interest" description="Disordered" evidence="2">
    <location>
        <begin position="474"/>
        <end position="494"/>
    </location>
</feature>